<accession>Q8R2M0</accession>
<accession>Q9CZZ2</accession>
<accession>Q9D7X9</accession>
<feature type="chain" id="PRO_0000286575" description="Transcription elongation factor A N-terminal and central domain-containing protein 2">
    <location>
        <begin position="1"/>
        <end position="207"/>
    </location>
</feature>
<feature type="domain" description="TFIIS N-terminal" evidence="2">
    <location>
        <begin position="39"/>
        <end position="113"/>
    </location>
</feature>
<feature type="domain" description="TFIIS central" evidence="3">
    <location>
        <begin position="130"/>
        <end position="207"/>
    </location>
</feature>
<feature type="modified residue" description="N-acetylmethionine" evidence="1">
    <location>
        <position position="1"/>
    </location>
</feature>
<feature type="sequence conflict" description="In Ref. 1; BAB27962." evidence="4" ref="1">
    <original>M</original>
    <variation>T</variation>
    <location>
        <position position="47"/>
    </location>
</feature>
<protein>
    <recommendedName>
        <fullName>Transcription elongation factor A N-terminal and central domain-containing protein 2</fullName>
    </recommendedName>
</protein>
<reference key="1">
    <citation type="journal article" date="2005" name="Science">
        <title>The transcriptional landscape of the mammalian genome.</title>
        <authorList>
            <person name="Carninci P."/>
            <person name="Kasukawa T."/>
            <person name="Katayama S."/>
            <person name="Gough J."/>
            <person name="Frith M.C."/>
            <person name="Maeda N."/>
            <person name="Oyama R."/>
            <person name="Ravasi T."/>
            <person name="Lenhard B."/>
            <person name="Wells C."/>
            <person name="Kodzius R."/>
            <person name="Shimokawa K."/>
            <person name="Bajic V.B."/>
            <person name="Brenner S.E."/>
            <person name="Batalov S."/>
            <person name="Forrest A.R."/>
            <person name="Zavolan M."/>
            <person name="Davis M.J."/>
            <person name="Wilming L.G."/>
            <person name="Aidinis V."/>
            <person name="Allen J.E."/>
            <person name="Ambesi-Impiombato A."/>
            <person name="Apweiler R."/>
            <person name="Aturaliya R.N."/>
            <person name="Bailey T.L."/>
            <person name="Bansal M."/>
            <person name="Baxter L."/>
            <person name="Beisel K.W."/>
            <person name="Bersano T."/>
            <person name="Bono H."/>
            <person name="Chalk A.M."/>
            <person name="Chiu K.P."/>
            <person name="Choudhary V."/>
            <person name="Christoffels A."/>
            <person name="Clutterbuck D.R."/>
            <person name="Crowe M.L."/>
            <person name="Dalla E."/>
            <person name="Dalrymple B.P."/>
            <person name="de Bono B."/>
            <person name="Della Gatta G."/>
            <person name="di Bernardo D."/>
            <person name="Down T."/>
            <person name="Engstrom P."/>
            <person name="Fagiolini M."/>
            <person name="Faulkner G."/>
            <person name="Fletcher C.F."/>
            <person name="Fukushima T."/>
            <person name="Furuno M."/>
            <person name="Futaki S."/>
            <person name="Gariboldi M."/>
            <person name="Georgii-Hemming P."/>
            <person name="Gingeras T.R."/>
            <person name="Gojobori T."/>
            <person name="Green R.E."/>
            <person name="Gustincich S."/>
            <person name="Harbers M."/>
            <person name="Hayashi Y."/>
            <person name="Hensch T.K."/>
            <person name="Hirokawa N."/>
            <person name="Hill D."/>
            <person name="Huminiecki L."/>
            <person name="Iacono M."/>
            <person name="Ikeo K."/>
            <person name="Iwama A."/>
            <person name="Ishikawa T."/>
            <person name="Jakt M."/>
            <person name="Kanapin A."/>
            <person name="Katoh M."/>
            <person name="Kawasawa Y."/>
            <person name="Kelso J."/>
            <person name="Kitamura H."/>
            <person name="Kitano H."/>
            <person name="Kollias G."/>
            <person name="Krishnan S.P."/>
            <person name="Kruger A."/>
            <person name="Kummerfeld S.K."/>
            <person name="Kurochkin I.V."/>
            <person name="Lareau L.F."/>
            <person name="Lazarevic D."/>
            <person name="Lipovich L."/>
            <person name="Liu J."/>
            <person name="Liuni S."/>
            <person name="McWilliam S."/>
            <person name="Madan Babu M."/>
            <person name="Madera M."/>
            <person name="Marchionni L."/>
            <person name="Matsuda H."/>
            <person name="Matsuzawa S."/>
            <person name="Miki H."/>
            <person name="Mignone F."/>
            <person name="Miyake S."/>
            <person name="Morris K."/>
            <person name="Mottagui-Tabar S."/>
            <person name="Mulder N."/>
            <person name="Nakano N."/>
            <person name="Nakauchi H."/>
            <person name="Ng P."/>
            <person name="Nilsson R."/>
            <person name="Nishiguchi S."/>
            <person name="Nishikawa S."/>
            <person name="Nori F."/>
            <person name="Ohara O."/>
            <person name="Okazaki Y."/>
            <person name="Orlando V."/>
            <person name="Pang K.C."/>
            <person name="Pavan W.J."/>
            <person name="Pavesi G."/>
            <person name="Pesole G."/>
            <person name="Petrovsky N."/>
            <person name="Piazza S."/>
            <person name="Reed J."/>
            <person name="Reid J.F."/>
            <person name="Ring B.Z."/>
            <person name="Ringwald M."/>
            <person name="Rost B."/>
            <person name="Ruan Y."/>
            <person name="Salzberg S.L."/>
            <person name="Sandelin A."/>
            <person name="Schneider C."/>
            <person name="Schoenbach C."/>
            <person name="Sekiguchi K."/>
            <person name="Semple C.A."/>
            <person name="Seno S."/>
            <person name="Sessa L."/>
            <person name="Sheng Y."/>
            <person name="Shibata Y."/>
            <person name="Shimada H."/>
            <person name="Shimada K."/>
            <person name="Silva D."/>
            <person name="Sinclair B."/>
            <person name="Sperling S."/>
            <person name="Stupka E."/>
            <person name="Sugiura K."/>
            <person name="Sultana R."/>
            <person name="Takenaka Y."/>
            <person name="Taki K."/>
            <person name="Tammoja K."/>
            <person name="Tan S.L."/>
            <person name="Tang S."/>
            <person name="Taylor M.S."/>
            <person name="Tegner J."/>
            <person name="Teichmann S.A."/>
            <person name="Ueda H.R."/>
            <person name="van Nimwegen E."/>
            <person name="Verardo R."/>
            <person name="Wei C.L."/>
            <person name="Yagi K."/>
            <person name="Yamanishi H."/>
            <person name="Zabarovsky E."/>
            <person name="Zhu S."/>
            <person name="Zimmer A."/>
            <person name="Hide W."/>
            <person name="Bult C."/>
            <person name="Grimmond S.M."/>
            <person name="Teasdale R.D."/>
            <person name="Liu E.T."/>
            <person name="Brusic V."/>
            <person name="Quackenbush J."/>
            <person name="Wahlestedt C."/>
            <person name="Mattick J.S."/>
            <person name="Hume D.A."/>
            <person name="Kai C."/>
            <person name="Sasaki D."/>
            <person name="Tomaru Y."/>
            <person name="Fukuda S."/>
            <person name="Kanamori-Katayama M."/>
            <person name="Suzuki M."/>
            <person name="Aoki J."/>
            <person name="Arakawa T."/>
            <person name="Iida J."/>
            <person name="Imamura K."/>
            <person name="Itoh M."/>
            <person name="Kato T."/>
            <person name="Kawaji H."/>
            <person name="Kawagashira N."/>
            <person name="Kawashima T."/>
            <person name="Kojima M."/>
            <person name="Kondo S."/>
            <person name="Konno H."/>
            <person name="Nakano K."/>
            <person name="Ninomiya N."/>
            <person name="Nishio T."/>
            <person name="Okada M."/>
            <person name="Plessy C."/>
            <person name="Shibata K."/>
            <person name="Shiraki T."/>
            <person name="Suzuki S."/>
            <person name="Tagami M."/>
            <person name="Waki K."/>
            <person name="Watahiki A."/>
            <person name="Okamura-Oho Y."/>
            <person name="Suzuki H."/>
            <person name="Kawai J."/>
            <person name="Hayashizaki Y."/>
        </authorList>
    </citation>
    <scope>NUCLEOTIDE SEQUENCE [LARGE SCALE MRNA]</scope>
    <source>
        <strain>C57BL/6J</strain>
        <tissue>Embryo</tissue>
        <tissue>Stomach</tissue>
    </source>
</reference>
<reference key="2">
    <citation type="journal article" date="2004" name="Genome Res.">
        <title>The status, quality, and expansion of the NIH full-length cDNA project: the Mammalian Gene Collection (MGC).</title>
        <authorList>
            <consortium name="The MGC Project Team"/>
        </authorList>
    </citation>
    <scope>NUCLEOTIDE SEQUENCE [LARGE SCALE MRNA]</scope>
    <source>
        <strain>Czech II</strain>
        <tissue>Mammary tumor</tissue>
    </source>
</reference>
<dbReference type="EMBL" id="AK008715">
    <property type="protein sequence ID" value="BAB25851.1"/>
    <property type="molecule type" value="mRNA"/>
</dbReference>
<dbReference type="EMBL" id="AK011991">
    <property type="protein sequence ID" value="BAB27962.1"/>
    <property type="status" value="ALT_FRAME"/>
    <property type="molecule type" value="mRNA"/>
</dbReference>
<dbReference type="EMBL" id="BC028321">
    <property type="protein sequence ID" value="AAH28321.1"/>
    <property type="molecule type" value="mRNA"/>
</dbReference>
<dbReference type="CCDS" id="CCDS18431.1"/>
<dbReference type="RefSeq" id="NP_079893.1">
    <property type="nucleotide sequence ID" value="NM_025617.2"/>
</dbReference>
<dbReference type="RefSeq" id="XP_006503337.1">
    <property type="nucleotide sequence ID" value="XM_006503274.4"/>
</dbReference>
<dbReference type="SMR" id="Q8R2M0"/>
<dbReference type="BioGRID" id="211536">
    <property type="interactions" value="2"/>
</dbReference>
<dbReference type="FunCoup" id="Q8R2M0">
    <property type="interactions" value="2739"/>
</dbReference>
<dbReference type="STRING" id="10090.ENSMUSP00000059741"/>
<dbReference type="iPTMnet" id="Q8R2M0"/>
<dbReference type="PhosphoSitePlus" id="Q8R2M0"/>
<dbReference type="PaxDb" id="10090-ENSMUSP00000059741"/>
<dbReference type="PeptideAtlas" id="Q8R2M0"/>
<dbReference type="ProteomicsDB" id="259370"/>
<dbReference type="Antibodypedia" id="33160">
    <property type="antibodies" value="158 antibodies from 19 providers"/>
</dbReference>
<dbReference type="DNASU" id="66526"/>
<dbReference type="Ensembl" id="ENSMUST00000030362.12">
    <property type="protein sequence ID" value="ENSMUSP00000030362.6"/>
    <property type="gene ID" value="ENSMUSG00000028619.16"/>
</dbReference>
<dbReference type="Ensembl" id="ENSMUST00000057043.10">
    <property type="protein sequence ID" value="ENSMUSP00000059741.4"/>
    <property type="gene ID" value="ENSMUSG00000028619.16"/>
</dbReference>
<dbReference type="Ensembl" id="ENSMUST00000058585.14">
    <property type="protein sequence ID" value="ENSMUSP00000054142.8"/>
    <property type="gene ID" value="ENSMUSG00000028619.16"/>
</dbReference>
<dbReference type="GeneID" id="66526"/>
<dbReference type="KEGG" id="mmu:66526"/>
<dbReference type="UCSC" id="uc008tzh.1">
    <property type="organism name" value="mouse"/>
</dbReference>
<dbReference type="AGR" id="MGI:1913776"/>
<dbReference type="CTD" id="127428"/>
<dbReference type="MGI" id="MGI:1913776">
    <property type="gene designation" value="Tceanc2"/>
</dbReference>
<dbReference type="VEuPathDB" id="HostDB:ENSMUSG00000028619"/>
<dbReference type="eggNOG" id="KOG1105">
    <property type="taxonomic scope" value="Eukaryota"/>
</dbReference>
<dbReference type="GeneTree" id="ENSGT00390000014384"/>
<dbReference type="InParanoid" id="Q8R2M0"/>
<dbReference type="OMA" id="QPKENLM"/>
<dbReference type="OrthoDB" id="44867at2759"/>
<dbReference type="PhylomeDB" id="Q8R2M0"/>
<dbReference type="TreeFam" id="TF331911"/>
<dbReference type="BioGRID-ORCS" id="66526">
    <property type="hits" value="3 hits in 76 CRISPR screens"/>
</dbReference>
<dbReference type="ChiTaRS" id="Tceanc2">
    <property type="organism name" value="mouse"/>
</dbReference>
<dbReference type="PRO" id="PR:Q8R2M0"/>
<dbReference type="Proteomes" id="UP000000589">
    <property type="component" value="Chromosome 4"/>
</dbReference>
<dbReference type="RNAct" id="Q8R2M0">
    <property type="molecule type" value="protein"/>
</dbReference>
<dbReference type="Bgee" id="ENSMUSG00000028619">
    <property type="expression patterns" value="Expressed in granulocyte and 186 other cell types or tissues"/>
</dbReference>
<dbReference type="ExpressionAtlas" id="Q8R2M0">
    <property type="expression patterns" value="baseline and differential"/>
</dbReference>
<dbReference type="GO" id="GO:0005634">
    <property type="term" value="C:nucleus"/>
    <property type="evidence" value="ECO:0007669"/>
    <property type="project" value="UniProtKB-SubCell"/>
</dbReference>
<dbReference type="GO" id="GO:0006351">
    <property type="term" value="P:DNA-templated transcription"/>
    <property type="evidence" value="ECO:0007669"/>
    <property type="project" value="InterPro"/>
</dbReference>
<dbReference type="CDD" id="cd00183">
    <property type="entry name" value="TFIIS_I"/>
    <property type="match status" value="1"/>
</dbReference>
<dbReference type="Gene3D" id="1.20.930.10">
    <property type="entry name" value="Conserved domain common to transcription factors TFIIS, elongin A, CRSP70"/>
    <property type="match status" value="1"/>
</dbReference>
<dbReference type="Gene3D" id="1.10.472.30">
    <property type="entry name" value="Transcription elongation factor S-II, central domain"/>
    <property type="match status" value="1"/>
</dbReference>
<dbReference type="InterPro" id="IPR003617">
    <property type="entry name" value="TFIIS/CRSP70_N_sub"/>
</dbReference>
<dbReference type="InterPro" id="IPR035441">
    <property type="entry name" value="TFIIS/LEDGF_dom_sf"/>
</dbReference>
<dbReference type="InterPro" id="IPR003618">
    <property type="entry name" value="TFIIS_cen_dom"/>
</dbReference>
<dbReference type="InterPro" id="IPR036575">
    <property type="entry name" value="TFIIS_cen_dom_sf"/>
</dbReference>
<dbReference type="InterPro" id="IPR017923">
    <property type="entry name" value="TFIIS_N"/>
</dbReference>
<dbReference type="PANTHER" id="PTHR11477:SF14">
    <property type="entry name" value="TRANSCRIPTION ELONGATION FACTOR A N-TERMINAL AND CENTRAL DOMAIN-CONTAINING PROTEIN 2"/>
    <property type="match status" value="1"/>
</dbReference>
<dbReference type="PANTHER" id="PTHR11477">
    <property type="entry name" value="TRANSCRIPTION FACTOR S-II ZINC FINGER DOMAIN-CONTAINING PROTEIN"/>
    <property type="match status" value="1"/>
</dbReference>
<dbReference type="Pfam" id="PF08711">
    <property type="entry name" value="Med26"/>
    <property type="match status" value="1"/>
</dbReference>
<dbReference type="SMART" id="SM00509">
    <property type="entry name" value="TFS2N"/>
    <property type="match status" value="1"/>
</dbReference>
<dbReference type="SUPFAM" id="SSF47676">
    <property type="entry name" value="Conserved domain common to transcription factors TFIIS, elongin A, CRSP70"/>
    <property type="match status" value="1"/>
</dbReference>
<dbReference type="SUPFAM" id="SSF46942">
    <property type="entry name" value="Elongation factor TFIIS domain 2"/>
    <property type="match status" value="1"/>
</dbReference>
<dbReference type="PROSITE" id="PS51321">
    <property type="entry name" value="TFIIS_CENTRAL"/>
    <property type="match status" value="1"/>
</dbReference>
<dbReference type="PROSITE" id="PS51319">
    <property type="entry name" value="TFIIS_N"/>
    <property type="match status" value="1"/>
</dbReference>
<comment type="subcellular location">
    <subcellularLocation>
        <location evidence="2 3">Nucleus</location>
    </subcellularLocation>
</comment>
<comment type="similarity">
    <text evidence="4">Belongs to the TCEANC2 family.</text>
</comment>
<comment type="sequence caution" evidence="4">
    <conflict type="frameshift">
        <sequence resource="EMBL-CDS" id="BAB27962"/>
    </conflict>
</comment>
<evidence type="ECO:0000250" key="1">
    <source>
        <dbReference type="UniProtKB" id="Q96MN5"/>
    </source>
</evidence>
<evidence type="ECO:0000255" key="2">
    <source>
        <dbReference type="PROSITE-ProRule" id="PRU00649"/>
    </source>
</evidence>
<evidence type="ECO:0000255" key="3">
    <source>
        <dbReference type="PROSITE-ProRule" id="PRU00651"/>
    </source>
</evidence>
<evidence type="ECO:0000305" key="4"/>
<keyword id="KW-0007">Acetylation</keyword>
<keyword id="KW-0539">Nucleus</keyword>
<keyword id="KW-1185">Reference proteome</keyword>
<proteinExistence type="evidence at transcript level"/>
<sequence length="207" mass="24200">MDKFVIRTPRIQNSPKKKLGEKVYKQATIESLKRVVVIEDIKRWKTMLELPDQTKENLVAALQELKKKMPSREVLRSTRIGHAVNKMRRHSDPEVAGLAKEVYTEWKTFIEKHLDRPSIEVRSDPKTESFRKNAQKLLSEALELKMDHLLVENIERETFHLCSRLINGPYRRTVRALVFTLKHRAEIREQVKSGALPVGTFVQTHKK</sequence>
<gene>
    <name type="primary">Tceanc2</name>
    <name type="synonym">Tdeanc2</name>
</gene>
<organism>
    <name type="scientific">Mus musculus</name>
    <name type="common">Mouse</name>
    <dbReference type="NCBI Taxonomy" id="10090"/>
    <lineage>
        <taxon>Eukaryota</taxon>
        <taxon>Metazoa</taxon>
        <taxon>Chordata</taxon>
        <taxon>Craniata</taxon>
        <taxon>Vertebrata</taxon>
        <taxon>Euteleostomi</taxon>
        <taxon>Mammalia</taxon>
        <taxon>Eutheria</taxon>
        <taxon>Euarchontoglires</taxon>
        <taxon>Glires</taxon>
        <taxon>Rodentia</taxon>
        <taxon>Myomorpha</taxon>
        <taxon>Muroidea</taxon>
        <taxon>Muridae</taxon>
        <taxon>Murinae</taxon>
        <taxon>Mus</taxon>
        <taxon>Mus</taxon>
    </lineage>
</organism>
<name>TEAN2_MOUSE</name>